<dbReference type="EMBL" id="AF420432">
    <property type="protein sequence ID" value="AAL09707.1"/>
    <property type="molecule type" value="mRNA"/>
</dbReference>
<dbReference type="SMR" id="P58374"/>
<dbReference type="GeneID" id="109473078"/>
<dbReference type="KEGG" id="bbel:109473078"/>
<dbReference type="OrthoDB" id="1928736at2759"/>
<dbReference type="Proteomes" id="UP000515135">
    <property type="component" value="Unplaced"/>
</dbReference>
<dbReference type="GO" id="GO:0022625">
    <property type="term" value="C:cytosolic large ribosomal subunit"/>
    <property type="evidence" value="ECO:0007669"/>
    <property type="project" value="InterPro"/>
</dbReference>
<dbReference type="GO" id="GO:0003723">
    <property type="term" value="F:RNA binding"/>
    <property type="evidence" value="ECO:0007669"/>
    <property type="project" value="InterPro"/>
</dbReference>
<dbReference type="GO" id="GO:0003735">
    <property type="term" value="F:structural constituent of ribosome"/>
    <property type="evidence" value="ECO:0007669"/>
    <property type="project" value="InterPro"/>
</dbReference>
<dbReference type="FunFam" id="3.30.1330.30:FF:000001">
    <property type="entry name" value="60S ribosomal protein L30"/>
    <property type="match status" value="1"/>
</dbReference>
<dbReference type="Gene3D" id="3.30.1330.30">
    <property type="match status" value="1"/>
</dbReference>
<dbReference type="HAMAP" id="MF_00481">
    <property type="entry name" value="Ribosomal_eL30"/>
    <property type="match status" value="1"/>
</dbReference>
<dbReference type="InterPro" id="IPR000231">
    <property type="entry name" value="Ribosomal_eL30"/>
</dbReference>
<dbReference type="InterPro" id="IPR039109">
    <property type="entry name" value="Ribosomal_eL30-like"/>
</dbReference>
<dbReference type="InterPro" id="IPR029064">
    <property type="entry name" value="Ribosomal_eL30-like_sf"/>
</dbReference>
<dbReference type="InterPro" id="IPR022991">
    <property type="entry name" value="Ribosomal_eL30_CS"/>
</dbReference>
<dbReference type="InterPro" id="IPR004038">
    <property type="entry name" value="Ribosomal_eL8/eL30/eS12/Gad45"/>
</dbReference>
<dbReference type="NCBIfam" id="NF002172">
    <property type="entry name" value="PRK01018.1"/>
    <property type="match status" value="1"/>
</dbReference>
<dbReference type="PANTHER" id="PTHR11449">
    <property type="entry name" value="RIBOSOMAL PROTEIN L30"/>
    <property type="match status" value="1"/>
</dbReference>
<dbReference type="Pfam" id="PF01248">
    <property type="entry name" value="Ribosomal_L7Ae"/>
    <property type="match status" value="1"/>
</dbReference>
<dbReference type="SUPFAM" id="SSF55315">
    <property type="entry name" value="L30e-like"/>
    <property type="match status" value="1"/>
</dbReference>
<dbReference type="PROSITE" id="PS00709">
    <property type="entry name" value="RIBOSOMAL_L30E_1"/>
    <property type="match status" value="1"/>
</dbReference>
<dbReference type="PROSITE" id="PS00993">
    <property type="entry name" value="RIBOSOMAL_L30E_2"/>
    <property type="match status" value="1"/>
</dbReference>
<gene>
    <name type="primary">RPL30</name>
</gene>
<feature type="chain" id="PRO_0000146127" description="Large ribosomal subunit protein eL30">
    <location>
        <begin position="1"/>
        <end position="114"/>
    </location>
</feature>
<sequence length="114" mass="12689">MKQKRKTMESINSRLQLVMKSGKYVLGLKETLKVLRQGKAKLIIIANNTPALRKSEIEYYAMLAKTGVHHYSGNNIELGTACGKYFRVCTLAITDPGDSDIIRSMPAEDKGEAK</sequence>
<name>RL30_BRABE</name>
<organism>
    <name type="scientific">Branchiostoma belcheri</name>
    <name type="common">Amphioxus</name>
    <dbReference type="NCBI Taxonomy" id="7741"/>
    <lineage>
        <taxon>Eukaryota</taxon>
        <taxon>Metazoa</taxon>
        <taxon>Chordata</taxon>
        <taxon>Cephalochordata</taxon>
        <taxon>Leptocardii</taxon>
        <taxon>Amphioxiformes</taxon>
        <taxon>Branchiostomatidae</taxon>
        <taxon>Branchiostoma</taxon>
    </lineage>
</organism>
<comment type="similarity">
    <text evidence="1">Belongs to the eukaryotic ribosomal protein eL30 family.</text>
</comment>
<evidence type="ECO:0000305" key="1"/>
<accession>P58374</accession>
<proteinExistence type="inferred from homology"/>
<reference key="1">
    <citation type="submission" date="2001-09" db="EMBL/GenBank/DDBJ databases">
        <title>The primary structure of amphioxus ribosomal protein L30.</title>
        <authorList>
            <person name="Chen Z."/>
            <person name="Zhang Y."/>
            <person name="Yang H."/>
            <person name="Zhang H."/>
            <person name="Han H."/>
            <person name="Li L."/>
            <person name="Wang X."/>
        </authorList>
    </citation>
    <scope>NUCLEOTIDE SEQUENCE [MRNA]</scope>
</reference>
<keyword id="KW-1185">Reference proteome</keyword>
<keyword id="KW-0687">Ribonucleoprotein</keyword>
<keyword id="KW-0689">Ribosomal protein</keyword>
<protein>
    <recommendedName>
        <fullName evidence="1">Large ribosomal subunit protein eL30</fullName>
    </recommendedName>
    <alternativeName>
        <fullName>60S ribosomal protein L30</fullName>
    </alternativeName>
</protein>